<dbReference type="EC" id="4.1.1.50" evidence="1"/>
<dbReference type="EMBL" id="CU468135">
    <property type="protein sequence ID" value="CAO95876.1"/>
    <property type="molecule type" value="Genomic_DNA"/>
</dbReference>
<dbReference type="RefSeq" id="WP_012440578.1">
    <property type="nucleotide sequence ID" value="NC_010694.1"/>
</dbReference>
<dbReference type="STRING" id="465817.ETA_08300"/>
<dbReference type="KEGG" id="eta:ETA_08300"/>
<dbReference type="eggNOG" id="COG1586">
    <property type="taxonomic scope" value="Bacteria"/>
</dbReference>
<dbReference type="HOGENOM" id="CLU_092007_0_0_6"/>
<dbReference type="OrthoDB" id="5290709at2"/>
<dbReference type="UniPathway" id="UPA00331">
    <property type="reaction ID" value="UER00451"/>
</dbReference>
<dbReference type="Proteomes" id="UP000001726">
    <property type="component" value="Chromosome"/>
</dbReference>
<dbReference type="GO" id="GO:0005829">
    <property type="term" value="C:cytosol"/>
    <property type="evidence" value="ECO:0007669"/>
    <property type="project" value="TreeGrafter"/>
</dbReference>
<dbReference type="GO" id="GO:0004014">
    <property type="term" value="F:adenosylmethionine decarboxylase activity"/>
    <property type="evidence" value="ECO:0007669"/>
    <property type="project" value="UniProtKB-UniRule"/>
</dbReference>
<dbReference type="GO" id="GO:0008295">
    <property type="term" value="P:spermidine biosynthetic process"/>
    <property type="evidence" value="ECO:0007669"/>
    <property type="project" value="UniProtKB-UniRule"/>
</dbReference>
<dbReference type="FunFam" id="3.60.90.10:FF:000001">
    <property type="entry name" value="S-adenosylmethionine decarboxylase proenzyme"/>
    <property type="match status" value="1"/>
</dbReference>
<dbReference type="Gene3D" id="3.60.90.10">
    <property type="entry name" value="S-adenosylmethionine decarboxylase"/>
    <property type="match status" value="1"/>
</dbReference>
<dbReference type="HAMAP" id="MF_00465">
    <property type="entry name" value="AdoMetDC_2"/>
    <property type="match status" value="1"/>
</dbReference>
<dbReference type="InterPro" id="IPR003826">
    <property type="entry name" value="AdoMetDC_fam_prok"/>
</dbReference>
<dbReference type="InterPro" id="IPR009165">
    <property type="entry name" value="S-AdoMet_deCO2ase_bac"/>
</dbReference>
<dbReference type="InterPro" id="IPR016067">
    <property type="entry name" value="S-AdoMet_deCO2ase_core"/>
</dbReference>
<dbReference type="NCBIfam" id="TIGR03331">
    <property type="entry name" value="SAM_DCase_Eco"/>
    <property type="match status" value="1"/>
</dbReference>
<dbReference type="PANTHER" id="PTHR33866">
    <property type="entry name" value="S-ADENOSYLMETHIONINE DECARBOXYLASE PROENZYME"/>
    <property type="match status" value="1"/>
</dbReference>
<dbReference type="PANTHER" id="PTHR33866:SF1">
    <property type="entry name" value="S-ADENOSYLMETHIONINE DECARBOXYLASE PROENZYME"/>
    <property type="match status" value="1"/>
</dbReference>
<dbReference type="Pfam" id="PF02675">
    <property type="entry name" value="AdoMet_dc"/>
    <property type="match status" value="1"/>
</dbReference>
<dbReference type="PIRSF" id="PIRSF001356">
    <property type="entry name" value="SAM_decarboxylas"/>
    <property type="match status" value="1"/>
</dbReference>
<dbReference type="SUPFAM" id="SSF56276">
    <property type="entry name" value="S-adenosylmethionine decarboxylase"/>
    <property type="match status" value="1"/>
</dbReference>
<proteinExistence type="inferred from homology"/>
<evidence type="ECO:0000255" key="1">
    <source>
        <dbReference type="HAMAP-Rule" id="MF_00465"/>
    </source>
</evidence>
<keyword id="KW-0068">Autocatalytic cleavage</keyword>
<keyword id="KW-0210">Decarboxylase</keyword>
<keyword id="KW-0456">Lyase</keyword>
<keyword id="KW-0620">Polyamine biosynthesis</keyword>
<keyword id="KW-0670">Pyruvate</keyword>
<keyword id="KW-1185">Reference proteome</keyword>
<keyword id="KW-0949">S-adenosyl-L-methionine</keyword>
<keyword id="KW-0704">Schiff base</keyword>
<keyword id="KW-0745">Spermidine biosynthesis</keyword>
<keyword id="KW-0865">Zymogen</keyword>
<accession>B2VD29</accession>
<protein>
    <recommendedName>
        <fullName evidence="1">S-adenosylmethionine decarboxylase proenzyme</fullName>
        <shortName evidence="1">AdoMetDC</shortName>
        <shortName evidence="1">SAMDC</shortName>
        <ecNumber evidence="1">4.1.1.50</ecNumber>
    </recommendedName>
    <component>
        <recommendedName>
            <fullName evidence="1">S-adenosylmethionine decarboxylase beta chain</fullName>
        </recommendedName>
    </component>
    <component>
        <recommendedName>
            <fullName evidence="1">S-adenosylmethionine decarboxylase alpha chain</fullName>
        </recommendedName>
    </component>
</protein>
<organism>
    <name type="scientific">Erwinia tasmaniensis (strain DSM 17950 / CFBP 7177 / CIP 109463 / NCPPB 4357 / Et1/99)</name>
    <dbReference type="NCBI Taxonomy" id="465817"/>
    <lineage>
        <taxon>Bacteria</taxon>
        <taxon>Pseudomonadati</taxon>
        <taxon>Pseudomonadota</taxon>
        <taxon>Gammaproteobacteria</taxon>
        <taxon>Enterobacterales</taxon>
        <taxon>Erwiniaceae</taxon>
        <taxon>Erwinia</taxon>
    </lineage>
</organism>
<name>SPED_ERWT9</name>
<feature type="chain" id="PRO_0000364371" description="S-adenosylmethionine decarboxylase beta chain" evidence="1">
    <location>
        <begin position="1"/>
        <end position="113"/>
    </location>
</feature>
<feature type="chain" id="PRO_0000364372" description="S-adenosylmethionine decarboxylase alpha chain" evidence="1">
    <location>
        <begin position="114"/>
        <end position="267"/>
    </location>
</feature>
<feature type="active site" description="Schiff-base intermediate with substrate; via pyruvic acid" evidence="1">
    <location>
        <position position="114"/>
    </location>
</feature>
<feature type="active site" description="Proton acceptor; for processing activity" evidence="1">
    <location>
        <position position="119"/>
    </location>
</feature>
<feature type="active site" description="Proton donor; for catalytic activity" evidence="1">
    <location>
        <position position="142"/>
    </location>
</feature>
<feature type="site" description="Cleavage (non-hydrolytic); by autolysis" evidence="1">
    <location>
        <begin position="113"/>
        <end position="114"/>
    </location>
</feature>
<feature type="modified residue" description="Pyruvic acid (Ser); by autocatalysis" evidence="1">
    <location>
        <position position="114"/>
    </location>
</feature>
<comment type="function">
    <text evidence="1">Catalyzes the decarboxylation of S-adenosylmethionine to S-adenosylmethioninamine (dcAdoMet), the propylamine donor required for the synthesis of the polyamines spermine and spermidine from the diamine putrescine.</text>
</comment>
<comment type="catalytic activity">
    <reaction evidence="1">
        <text>S-adenosyl-L-methionine + H(+) = S-adenosyl 3-(methylsulfanyl)propylamine + CO2</text>
        <dbReference type="Rhea" id="RHEA:15981"/>
        <dbReference type="ChEBI" id="CHEBI:15378"/>
        <dbReference type="ChEBI" id="CHEBI:16526"/>
        <dbReference type="ChEBI" id="CHEBI:57443"/>
        <dbReference type="ChEBI" id="CHEBI:59789"/>
        <dbReference type="EC" id="4.1.1.50"/>
    </reaction>
</comment>
<comment type="cofactor">
    <cofactor evidence="1">
        <name>pyruvate</name>
        <dbReference type="ChEBI" id="CHEBI:15361"/>
    </cofactor>
    <text evidence="1">Binds 1 pyruvoyl group covalently per subunit.</text>
</comment>
<comment type="pathway">
    <text evidence="1">Amine and polyamine biosynthesis; S-adenosylmethioninamine biosynthesis; S-adenosylmethioninamine from S-adenosyl-L-methionine: step 1/1.</text>
</comment>
<comment type="subunit">
    <text evidence="1">Heterooctamer of four alpha and four beta chains arranged as a tetramer of alpha/beta heterodimers.</text>
</comment>
<comment type="PTM">
    <text evidence="1">Is synthesized initially as an inactive proenzyme. Formation of the active enzyme involves a self-maturation process in which the active site pyruvoyl group is generated from an internal serine residue via an autocatalytic post-translational modification. Two non-identical subunits are generated from the proenzyme in this reaction, and the pyruvate is formed at the N-terminus of the alpha chain, which is derived from the carboxyl end of the proenzyme. The post-translation cleavage follows an unusual pathway, termed non-hydrolytic serinolysis, in which the side chain hydroxyl group of the serine supplies its oxygen atom to form the C-terminus of the beta chain, while the remainder of the serine residue undergoes an oxidative deamination to produce ammonia and the pyruvoyl group blocking the N-terminus of the alpha chain.</text>
</comment>
<comment type="similarity">
    <text evidence="1">Belongs to the prokaryotic AdoMetDC family. Type 2 subfamily.</text>
</comment>
<reference key="1">
    <citation type="journal article" date="2008" name="Environ. Microbiol.">
        <title>The genome of Erwinia tasmaniensis strain Et1/99, a non-pathogenic bacterium in the genus Erwinia.</title>
        <authorList>
            <person name="Kube M."/>
            <person name="Migdoll A.M."/>
            <person name="Mueller I."/>
            <person name="Kuhl H."/>
            <person name="Beck A."/>
            <person name="Reinhardt R."/>
            <person name="Geider K."/>
        </authorList>
    </citation>
    <scope>NUCLEOTIDE SEQUENCE [LARGE SCALE GENOMIC DNA]</scope>
    <source>
        <strain>DSM 17950 / CFBP 7177 / CIP 109463 / NCPPB 4357 / Et1/99</strain>
    </source>
</reference>
<gene>
    <name evidence="1" type="primary">speD</name>
    <name type="ordered locus">ETA_08300</name>
</gene>
<sequence length="267" mass="30728">MKLQKLKLHGFNNLTKSLSFCIYDICYANTEAERDGYIAYIDEQYNANRLTEILSETCSIIGANVLNIARQDYEPQGASVTILVSEEPIDPRDIDTSEHPGPLPNSVVAHLDKSHICVHTYPESHPEGGLCTFRADIEVSTCGVISPLKALNYLIHQLESDIVTIDYRVRGFTRDVNGVKHFIDHEINSIQNFMSEDMKSMYDMMDVNVYQENMFHTKMLLKEFDLKHYLFNTKPEDLSAQEHKRITDLLWKEMREIYYGRNIPAIG</sequence>